<gene>
    <name type="ordered locus">MPN_534</name>
    <name type="ORF">G12_orf140b</name>
    <name type="ORF">MP308</name>
</gene>
<feature type="chain" id="PRO_0000210693" description="Uncharacterized protein MPN_534">
    <location>
        <begin position="1"/>
        <end position="140"/>
    </location>
</feature>
<name>Y534_MYCPN</name>
<reference key="1">
    <citation type="journal article" date="1996" name="Nucleic Acids Res.">
        <title>Complete sequence analysis of the genome of the bacterium Mycoplasma pneumoniae.</title>
        <authorList>
            <person name="Himmelreich R."/>
            <person name="Hilbert H."/>
            <person name="Plagens H."/>
            <person name="Pirkl E."/>
            <person name="Li B.-C."/>
            <person name="Herrmann R."/>
        </authorList>
    </citation>
    <scope>NUCLEOTIDE SEQUENCE [LARGE SCALE GENOMIC DNA]</scope>
    <source>
        <strain>ATCC 29342 / M129 / Subtype 1</strain>
    </source>
</reference>
<dbReference type="EMBL" id="U00089">
    <property type="protein sequence ID" value="AAB95956.1"/>
    <property type="molecule type" value="Genomic_DNA"/>
</dbReference>
<dbReference type="PIR" id="S73634">
    <property type="entry name" value="S73634"/>
</dbReference>
<dbReference type="RefSeq" id="NP_110223.1">
    <property type="nucleotide sequence ID" value="NC_000912.1"/>
</dbReference>
<dbReference type="STRING" id="272634.MPN_534"/>
<dbReference type="EnsemblBacteria" id="AAB95956">
    <property type="protein sequence ID" value="AAB95956"/>
    <property type="gene ID" value="MPN_534"/>
</dbReference>
<dbReference type="KEGG" id="mpn:MPN_534"/>
<dbReference type="PATRIC" id="fig|272634.6.peg.596"/>
<dbReference type="HOGENOM" id="CLU_1832956_0_0_14"/>
<dbReference type="OrthoDB" id="9927563at2"/>
<dbReference type="BioCyc" id="MPNE272634:G1GJ3-881-MONOMER"/>
<dbReference type="Proteomes" id="UP000000808">
    <property type="component" value="Chromosome"/>
</dbReference>
<keyword id="KW-1185">Reference proteome</keyword>
<accession>P75244</accession>
<protein>
    <recommendedName>
        <fullName>Uncharacterized protein MPN_534</fullName>
    </recommendedName>
</protein>
<sequence length="140" mass="16381">MNTFKETLFSLKKSNYLLNESAQILNDCVVNNNEIDERLRNSIKFALGIINLASYCLKNEQEQLDHELNHGNEAPWEFSFNEAEQLIECTVKNNFGNEKLVDLIFHIGDAMETYRTTNIKFRVPKSYYDAKQQIRKVIKN</sequence>
<proteinExistence type="predicted"/>
<organism>
    <name type="scientific">Mycoplasma pneumoniae (strain ATCC 29342 / M129 / Subtype 1)</name>
    <name type="common">Mycoplasmoides pneumoniae</name>
    <dbReference type="NCBI Taxonomy" id="272634"/>
    <lineage>
        <taxon>Bacteria</taxon>
        <taxon>Bacillati</taxon>
        <taxon>Mycoplasmatota</taxon>
        <taxon>Mycoplasmoidales</taxon>
        <taxon>Mycoplasmoidaceae</taxon>
        <taxon>Mycoplasmoides</taxon>
    </lineage>
</organism>